<name>NDB4_UROYA</name>
<feature type="signal peptide" evidence="1">
    <location>
        <begin position="1"/>
        <end position="17"/>
    </location>
</feature>
<feature type="peptide" id="PRO_0000430185" description="Putative antimicrobial peptide 7848">
    <location>
        <begin position="18"/>
        <end position="35"/>
    </location>
</feature>
<feature type="propeptide" id="PRO_0000430186" evidence="1">
    <location>
        <begin position="38"/>
        <end position="82"/>
    </location>
</feature>
<feature type="region of interest" description="Disordered" evidence="2">
    <location>
        <begin position="16"/>
        <end position="60"/>
    </location>
</feature>
<feature type="compositionally biased region" description="Basic residues" evidence="2">
    <location>
        <begin position="50"/>
        <end position="60"/>
    </location>
</feature>
<sequence>MNENLWAAPAPKKLSKHFFGRGGPLGKETGPNLFPKKPGAGKGLGFPPTKKPRGQPRVLKKPKWNSEGLIGILHRGSDGVQF</sequence>
<reference key="1">
    <citation type="journal article" date="2013" name="Toxicon">
        <title>Characterization of the venom from the Australian scorpion Urodacus yaschenkoi: molecular mass analysis of components, cDNA sequences and peptides with antimicrobial activity.</title>
        <authorList>
            <person name="Luna-Ramirez K."/>
            <person name="Quintero-Hernandez V."/>
            <person name="Vargas-Jaimes L."/>
            <person name="Batista C.V."/>
            <person name="Winkel K.D."/>
            <person name="Possani L.D."/>
        </authorList>
    </citation>
    <scope>NUCLEOTIDE SEQUENCE [MRNA]</scope>
    <source>
        <tissue>Venom gland</tissue>
    </source>
</reference>
<protein>
    <recommendedName>
        <fullName>Putative antimicrobial peptide 7848</fullName>
        <shortName>Uy7848</shortName>
    </recommendedName>
</protein>
<accession>L0GCJ6</accession>
<organism>
    <name type="scientific">Urodacus yaschenkoi</name>
    <name type="common">Inland robust scorpion</name>
    <dbReference type="NCBI Taxonomy" id="1273102"/>
    <lineage>
        <taxon>Eukaryota</taxon>
        <taxon>Metazoa</taxon>
        <taxon>Ecdysozoa</taxon>
        <taxon>Arthropoda</taxon>
        <taxon>Chelicerata</taxon>
        <taxon>Arachnida</taxon>
        <taxon>Scorpiones</taxon>
        <taxon>Iurida</taxon>
        <taxon>Scorpionoidea</taxon>
        <taxon>Scorpionidae</taxon>
        <taxon>Urodacinae</taxon>
        <taxon>Urodacus</taxon>
    </lineage>
</organism>
<proteinExistence type="inferred from homology"/>
<dbReference type="EMBL" id="JX274251">
    <property type="protein sequence ID" value="AGA82765.1"/>
    <property type="molecule type" value="mRNA"/>
</dbReference>
<dbReference type="GO" id="GO:0005576">
    <property type="term" value="C:extracellular region"/>
    <property type="evidence" value="ECO:0007669"/>
    <property type="project" value="UniProtKB-SubCell"/>
</dbReference>
<comment type="subcellular location">
    <subcellularLocation>
        <location evidence="1">Secreted</location>
    </subcellularLocation>
</comment>
<comment type="tissue specificity">
    <text evidence="3">Expressed by the venom gland.</text>
</comment>
<comment type="similarity">
    <text evidence="3">Belongs to the non-disulfide-bridged peptide (NDBP) superfamily. Short antimicrobial peptide (group 4) family.</text>
</comment>
<keyword id="KW-0165">Cleavage on pair of basic residues</keyword>
<keyword id="KW-0964">Secreted</keyword>
<keyword id="KW-0732">Signal</keyword>
<evidence type="ECO:0000250" key="1"/>
<evidence type="ECO:0000256" key="2">
    <source>
        <dbReference type="SAM" id="MobiDB-lite"/>
    </source>
</evidence>
<evidence type="ECO:0000305" key="3"/>